<organism>
    <name type="scientific">Escherichia coli</name>
    <dbReference type="NCBI Taxonomy" id="562"/>
    <lineage>
        <taxon>Bacteria</taxon>
        <taxon>Pseudomonadati</taxon>
        <taxon>Pseudomonadota</taxon>
        <taxon>Gammaproteobacteria</taxon>
        <taxon>Enterobacterales</taxon>
        <taxon>Enterobacteriaceae</taxon>
        <taxon>Escherichia</taxon>
    </lineage>
</organism>
<proteinExistence type="predicted"/>
<accession>P18809</accession>
<evidence type="ECO:0000250" key="1"/>
<sequence>MSRLKQPIFLKKIKKVINTIPRLEEQIFACRNKKRSDNPLLFIDRKDEERILMSLYFMENESSSPHSILCFIYWRYTKKIYRLSEDIVSDVANTYVDNIPAQILKELPSWSIYVSAENLHTILPTSYPIHGFFFYPFLNGGGGIIQLFIIDNLKQSQGTTGLKEKNIDVVGGIIGMEDSRGGLLGSRKMECIDNEVVVTVNEKLKDFRDREFNLLNAQISMVLYICSQINDIKEKNQFKRSEKHKKHVHTHHELPAHNIREWDVGIRMGQAIRQYRQQNPQDRATHRCKRPHIRRDTGIHTDRSKKPKLAHERKPRLIWLPPVPVNLEDVNKLPVVITPIDK</sequence>
<reference key="1">
    <citation type="journal article" date="1989" name="Mol. Gen. Genet.">
        <title>Molecular analysis and nucleotide sequence of finQ, a transcriptional inhibitor of the F plasmid transfer genes.</title>
        <authorList>
            <person name="Ham L.M."/>
            <person name="Skurray R.A."/>
        </authorList>
    </citation>
    <scope>NUCLEOTIDE SEQUENCE [GENOMIC DNA]</scope>
</reference>
<name>FINQ_ECOLX</name>
<geneLocation type="plasmid">
    <name>IncI R820a</name>
</geneLocation>
<dbReference type="EMBL" id="X52664">
    <property type="protein sequence ID" value="CAA36892.1"/>
    <property type="molecule type" value="Genomic_DNA"/>
</dbReference>
<dbReference type="PIR" id="JE0060">
    <property type="entry name" value="BVECFQ"/>
</dbReference>
<dbReference type="SMR" id="P18809"/>
<dbReference type="GO" id="GO:0003677">
    <property type="term" value="F:DNA binding"/>
    <property type="evidence" value="ECO:0007669"/>
    <property type="project" value="UniProtKB-KW"/>
</dbReference>
<dbReference type="CDD" id="cd22987">
    <property type="entry name" value="AcrVA2-like"/>
    <property type="match status" value="1"/>
</dbReference>
<keyword id="KW-0238">DNA-binding</keyword>
<keyword id="KW-0614">Plasmid</keyword>
<keyword id="KW-0678">Repressor</keyword>
<keyword id="KW-0804">Transcription</keyword>
<keyword id="KW-0805">Transcription regulation</keyword>
<comment type="function">
    <text>Transcriptional inhibitor of the F plasmid transfer genes. FinQ may regulate a gene or genes encoded on the IncI plasmids, and coincidentally may inhibit F transfer when coresident.</text>
</comment>
<protein>
    <recommendedName>
        <fullName>Protein FinQ</fullName>
    </recommendedName>
</protein>
<gene>
    <name type="primary">finQ</name>
</gene>
<feature type="chain" id="PRO_0000068354" description="Protein FinQ">
    <location>
        <begin position="1"/>
        <end position="342"/>
    </location>
</feature>
<feature type="DNA-binding region" description="H-T-H motif" evidence="1">
    <location>
        <begin position="208"/>
        <end position="227"/>
    </location>
</feature>